<sequence length="85" mass="9078">MTRFFCCGSYFPGYPSYGTNFHRTFRATPLNCVVPLGSPLGYGCNGYSSLGYGFGGSSFSNLGCGYGGSFYRPWGSGSGFGYSTY</sequence>
<accession>Q28580</accession>
<reference key="1">
    <citation type="journal article" date="1987" name="Eur. J. Biochem.">
        <title>Sheep wool (glycine + tyrosine)-rich keratin genes. A family of low sequence homology.</title>
        <authorList>
            <person name="Kuczek E.S."/>
            <person name="Rogers G.E."/>
        </authorList>
    </citation>
    <scope>NUCLEOTIDE SEQUENCE [GENOMIC DNA]</scope>
    <source>
        <strain>Merino</strain>
    </source>
</reference>
<keyword id="KW-0416">Keratin</keyword>
<keyword id="KW-1185">Reference proteome</keyword>
<keyword id="KW-0677">Repeat</keyword>
<protein>
    <recommendedName>
        <fullName>Keratin-associated protein 7-1</fullName>
    </recommendedName>
    <alternativeName>
        <fullName>HGT keratin</fullName>
    </alternativeName>
    <alternativeName>
        <fullName>HGT-C2</fullName>
    </alternativeName>
    <alternativeName>
        <fullName>High glycine-tyrosine keratin-associated protein 7.1</fullName>
    </alternativeName>
</protein>
<organism>
    <name type="scientific">Ovis aries</name>
    <name type="common">Sheep</name>
    <dbReference type="NCBI Taxonomy" id="9940"/>
    <lineage>
        <taxon>Eukaryota</taxon>
        <taxon>Metazoa</taxon>
        <taxon>Chordata</taxon>
        <taxon>Craniata</taxon>
        <taxon>Vertebrata</taxon>
        <taxon>Euteleostomi</taxon>
        <taxon>Mammalia</taxon>
        <taxon>Eutheria</taxon>
        <taxon>Laurasiatheria</taxon>
        <taxon>Artiodactyla</taxon>
        <taxon>Ruminantia</taxon>
        <taxon>Pecora</taxon>
        <taxon>Bovidae</taxon>
        <taxon>Caprinae</taxon>
        <taxon>Ovis</taxon>
    </lineage>
</organism>
<dbReference type="EMBL" id="X05638">
    <property type="protein sequence ID" value="CAA29125.1"/>
    <property type="molecule type" value="Genomic_DNA"/>
</dbReference>
<dbReference type="PIR" id="S00071">
    <property type="entry name" value="S00071"/>
</dbReference>
<dbReference type="STRING" id="9940.ENSOARP00000008521"/>
<dbReference type="PaxDb" id="9940-ENSOARP00000008521"/>
<dbReference type="Ensembl" id="ENSOART00185019564">
    <property type="protein sequence ID" value="ENSOARP00185009787"/>
    <property type="gene ID" value="ENSOARG00185011972"/>
</dbReference>
<dbReference type="Ensembl" id="ENSOART00215080994">
    <property type="protein sequence ID" value="ENSOARP00215044826"/>
    <property type="gene ID" value="ENSOARG00215047701"/>
</dbReference>
<dbReference type="Ensembl" id="ENSOART00220013201">
    <property type="protein sequence ID" value="ENSOARP00220007553"/>
    <property type="gene ID" value="ENSOARG00220007907"/>
</dbReference>
<dbReference type="Ensembl" id="ENSOART00225068393">
    <property type="protein sequence ID" value="ENSOARP00225035026"/>
    <property type="gene ID" value="ENSOARG00225041200"/>
</dbReference>
<dbReference type="Ensembl" id="ENSOART00260001783">
    <property type="protein sequence ID" value="ENSOARP00260001196"/>
    <property type="gene ID" value="ENSOARG00260000982"/>
</dbReference>
<dbReference type="GeneID" id="101104027"/>
<dbReference type="KEGG" id="oas:101104027"/>
<dbReference type="eggNOG" id="ENOG502TDVI">
    <property type="taxonomic scope" value="Eukaryota"/>
</dbReference>
<dbReference type="HOGENOM" id="CLU_2482768_0_0_1"/>
<dbReference type="OMA" id="FCCGNYF"/>
<dbReference type="OrthoDB" id="9794157at2759"/>
<dbReference type="Proteomes" id="UP000002356">
    <property type="component" value="Chromosome 1"/>
</dbReference>
<dbReference type="GO" id="GO:0005882">
    <property type="term" value="C:intermediate filament"/>
    <property type="evidence" value="ECO:0007669"/>
    <property type="project" value="UniProtKB-KW"/>
</dbReference>
<dbReference type="InterPro" id="IPR020184">
    <property type="entry name" value="KRTAP7"/>
</dbReference>
<dbReference type="PANTHER" id="PTHR38504">
    <property type="entry name" value="KERATIN-ASSOCIATED PROTEIN 7-1"/>
    <property type="match status" value="1"/>
</dbReference>
<dbReference type="PANTHER" id="PTHR38504:SF1">
    <property type="entry name" value="KERATIN-ASSOCIATED PROTEIN 7-1"/>
    <property type="match status" value="1"/>
</dbReference>
<dbReference type="Pfam" id="PF15034">
    <property type="entry name" value="KRTAP7"/>
    <property type="match status" value="1"/>
</dbReference>
<proteinExistence type="evidence at transcript level"/>
<comment type="function">
    <text>In the wool cortex, wool keratin intermediate filaments are embedded in an interfilamentous matrix, consisting of hair keratin-associated proteins (KRTAP), which are essential for the formation of a rigid and resistant wool shaft through their extensive disulfide bond cross-linking with abundant cysteine residues of wool keratins. The matrix proteins include the high-sulfur and high-glycine-tyrosine keratins.</text>
</comment>
<comment type="subunit">
    <text>Interacts with wool keratins.</text>
</comment>
<comment type="tissue specificity">
    <text>Wool.</text>
</comment>
<comment type="similarity">
    <text evidence="1">Belongs to the KRTAP type 7 family.</text>
</comment>
<name>KRA71_SHEEP</name>
<feature type="chain" id="PRO_0000185184" description="Keratin-associated protein 7-1">
    <location>
        <begin position="1"/>
        <end position="85"/>
    </location>
</feature>
<feature type="region of interest" description="12 X 2 AA repeats of G-[YCGS]">
    <location>
        <begin position="37"/>
        <end position="82"/>
    </location>
</feature>
<gene>
    <name type="primary">KRTAP7-1</name>
    <name type="synonym">HGTC2</name>
</gene>
<evidence type="ECO:0000305" key="1"/>